<proteinExistence type="evidence at transcript level"/>
<dbReference type="EMBL" id="M55251">
    <property type="protein sequence ID" value="AAA30846.1"/>
    <property type="molecule type" value="mRNA"/>
</dbReference>
<dbReference type="PIR" id="A40018">
    <property type="entry name" value="A40018"/>
</dbReference>
<dbReference type="RefSeq" id="NP_001003370.1">
    <property type="nucleotide sequence ID" value="NM_001003370.1"/>
</dbReference>
<dbReference type="SMR" id="P25473"/>
<dbReference type="FunCoup" id="P25473">
    <property type="interactions" value="176"/>
</dbReference>
<dbReference type="STRING" id="9615.ENSCAFP00000034804"/>
<dbReference type="GlyCosmos" id="P25473">
    <property type="glycosylation" value="7 sites, No reported glycans"/>
</dbReference>
<dbReference type="PaxDb" id="9612-ENSCAFP00000012350"/>
<dbReference type="Ensembl" id="ENSCAFT00040032862.1">
    <property type="protein sequence ID" value="ENSCAFP00040028589.1"/>
    <property type="gene ID" value="ENSCAFG00040017797.1"/>
</dbReference>
<dbReference type="GeneID" id="442971"/>
<dbReference type="KEGG" id="cfa:442971"/>
<dbReference type="CTD" id="1191"/>
<dbReference type="eggNOG" id="ENOG502RBQP">
    <property type="taxonomic scope" value="Eukaryota"/>
</dbReference>
<dbReference type="HOGENOM" id="CLU_042162_2_0_1"/>
<dbReference type="InParanoid" id="P25473"/>
<dbReference type="OrthoDB" id="9018825at2759"/>
<dbReference type="Reactome" id="R-CFA-114608">
    <property type="pathway name" value="Platelet degranulation"/>
</dbReference>
<dbReference type="Reactome" id="R-CFA-166665">
    <property type="pathway name" value="Terminal pathway of complement"/>
</dbReference>
<dbReference type="Reactome" id="R-CFA-977606">
    <property type="pathway name" value="Regulation of Complement cascade"/>
</dbReference>
<dbReference type="Proteomes" id="UP000002254">
    <property type="component" value="Unplaced"/>
</dbReference>
<dbReference type="Proteomes" id="UP000694429">
    <property type="component" value="Unplaced"/>
</dbReference>
<dbReference type="Proteomes" id="UP000694542">
    <property type="component" value="Chromosome 25"/>
</dbReference>
<dbReference type="Proteomes" id="UP000805418">
    <property type="component" value="Unplaced"/>
</dbReference>
<dbReference type="Bgee" id="ENSCAFG00000008404">
    <property type="expression patterns" value="Expressed in thyroid gland and 44 other cell types or tissues"/>
</dbReference>
<dbReference type="GO" id="GO:0042583">
    <property type="term" value="C:chromaffin granule"/>
    <property type="evidence" value="ECO:0007669"/>
    <property type="project" value="UniProtKB-SubCell"/>
</dbReference>
<dbReference type="GO" id="GO:0005829">
    <property type="term" value="C:cytosol"/>
    <property type="evidence" value="ECO:0000250"/>
    <property type="project" value="UniProtKB"/>
</dbReference>
<dbReference type="GO" id="GO:0005788">
    <property type="term" value="C:endoplasmic reticulum lumen"/>
    <property type="evidence" value="ECO:0000304"/>
    <property type="project" value="ParkinsonsUK-UCL"/>
</dbReference>
<dbReference type="GO" id="GO:0005615">
    <property type="term" value="C:extracellular space"/>
    <property type="evidence" value="ECO:0000250"/>
    <property type="project" value="UniProtKB"/>
</dbReference>
<dbReference type="GO" id="GO:0005794">
    <property type="term" value="C:Golgi apparatus"/>
    <property type="evidence" value="ECO:0000314"/>
    <property type="project" value="ParkinsonsUK-UCL"/>
</dbReference>
<dbReference type="GO" id="GO:0005743">
    <property type="term" value="C:mitochondrial inner membrane"/>
    <property type="evidence" value="ECO:0000250"/>
    <property type="project" value="UniProtKB"/>
</dbReference>
<dbReference type="GO" id="GO:0005739">
    <property type="term" value="C:mitochondrion"/>
    <property type="evidence" value="ECO:0000250"/>
    <property type="project" value="UniProtKB"/>
</dbReference>
<dbReference type="GO" id="GO:0005634">
    <property type="term" value="C:nucleus"/>
    <property type="evidence" value="ECO:0000250"/>
    <property type="project" value="UniProtKB"/>
</dbReference>
<dbReference type="GO" id="GO:0099020">
    <property type="term" value="C:perinuclear endoplasmic reticulum lumen"/>
    <property type="evidence" value="ECO:0000250"/>
    <property type="project" value="UniProtKB"/>
</dbReference>
<dbReference type="GO" id="GO:0048471">
    <property type="term" value="C:perinuclear region of cytoplasm"/>
    <property type="evidence" value="ECO:0000250"/>
    <property type="project" value="UniProtKB"/>
</dbReference>
<dbReference type="GO" id="GO:0034366">
    <property type="term" value="C:spherical high-density lipoprotein particle"/>
    <property type="evidence" value="ECO:0000250"/>
    <property type="project" value="UniProtKB"/>
</dbReference>
<dbReference type="GO" id="GO:0051787">
    <property type="term" value="F:misfolded protein binding"/>
    <property type="evidence" value="ECO:0000250"/>
    <property type="project" value="UniProtKB"/>
</dbReference>
<dbReference type="GO" id="GO:0051087">
    <property type="term" value="F:protein-folding chaperone binding"/>
    <property type="evidence" value="ECO:0000353"/>
    <property type="project" value="ParkinsonsUK-UCL"/>
</dbReference>
<dbReference type="GO" id="GO:0031625">
    <property type="term" value="F:ubiquitin protein ligase binding"/>
    <property type="evidence" value="ECO:0000250"/>
    <property type="project" value="UniProtKB"/>
</dbReference>
<dbReference type="GO" id="GO:0051082">
    <property type="term" value="F:unfolded protein binding"/>
    <property type="evidence" value="ECO:0000250"/>
    <property type="project" value="UniProtKB"/>
</dbReference>
<dbReference type="GO" id="GO:0061077">
    <property type="term" value="P:chaperone-mediated protein folding"/>
    <property type="evidence" value="ECO:0000250"/>
    <property type="project" value="UniProtKB"/>
</dbReference>
<dbReference type="GO" id="GO:0002434">
    <property type="term" value="P:immune complex clearance"/>
    <property type="evidence" value="ECO:0000250"/>
    <property type="project" value="UniProtKB"/>
</dbReference>
<dbReference type="GO" id="GO:0097193">
    <property type="term" value="P:intrinsic apoptotic signaling pathway"/>
    <property type="evidence" value="ECO:0000250"/>
    <property type="project" value="UniProtKB"/>
</dbReference>
<dbReference type="GO" id="GO:1905907">
    <property type="term" value="P:negative regulation of amyloid fibril formation"/>
    <property type="evidence" value="ECO:0000250"/>
    <property type="project" value="UniProtKB"/>
</dbReference>
<dbReference type="GO" id="GO:1902230">
    <property type="term" value="P:negative regulation of intrinsic apoptotic signaling pathway in response to DNA damage"/>
    <property type="evidence" value="ECO:0000250"/>
    <property type="project" value="UniProtKB"/>
</dbReference>
<dbReference type="GO" id="GO:0031333">
    <property type="term" value="P:negative regulation of protein-containing complex assembly"/>
    <property type="evidence" value="ECO:0000250"/>
    <property type="project" value="UniProtKB"/>
</dbReference>
<dbReference type="GO" id="GO:0043065">
    <property type="term" value="P:positive regulation of apoptotic process"/>
    <property type="evidence" value="ECO:0000250"/>
    <property type="project" value="UniProtKB"/>
</dbReference>
<dbReference type="GO" id="GO:2001244">
    <property type="term" value="P:positive regulation of intrinsic apoptotic signaling pathway"/>
    <property type="evidence" value="ECO:0000250"/>
    <property type="project" value="UniProtKB"/>
</dbReference>
<dbReference type="GO" id="GO:0051092">
    <property type="term" value="P:positive regulation of NF-kappaB transcription factor activity"/>
    <property type="evidence" value="ECO:0000250"/>
    <property type="project" value="UniProtKB"/>
</dbReference>
<dbReference type="GO" id="GO:0032436">
    <property type="term" value="P:positive regulation of proteasomal ubiquitin-dependent protein catabolic process"/>
    <property type="evidence" value="ECO:0000250"/>
    <property type="project" value="UniProtKB"/>
</dbReference>
<dbReference type="GO" id="GO:0048260">
    <property type="term" value="P:positive regulation of receptor-mediated endocytosis"/>
    <property type="evidence" value="ECO:0000315"/>
    <property type="project" value="UniProtKB"/>
</dbReference>
<dbReference type="GO" id="GO:2000060">
    <property type="term" value="P:positive regulation of ubiquitin-dependent protein catabolic process"/>
    <property type="evidence" value="ECO:0000250"/>
    <property type="project" value="UniProtKB"/>
</dbReference>
<dbReference type="GO" id="GO:0050821">
    <property type="term" value="P:protein stabilization"/>
    <property type="evidence" value="ECO:0000250"/>
    <property type="project" value="UniProtKB"/>
</dbReference>
<dbReference type="GO" id="GO:0042981">
    <property type="term" value="P:regulation of apoptotic process"/>
    <property type="evidence" value="ECO:0000318"/>
    <property type="project" value="GO_Central"/>
</dbReference>
<dbReference type="GO" id="GO:0042127">
    <property type="term" value="P:regulation of cell population proliferation"/>
    <property type="evidence" value="ECO:0000250"/>
    <property type="project" value="UniProtKB"/>
</dbReference>
<dbReference type="GO" id="GO:0051788">
    <property type="term" value="P:response to misfolded protein"/>
    <property type="evidence" value="ECO:0000250"/>
    <property type="project" value="UniProtKB"/>
</dbReference>
<dbReference type="InterPro" id="IPR016016">
    <property type="entry name" value="Clusterin"/>
</dbReference>
<dbReference type="InterPro" id="IPR000753">
    <property type="entry name" value="Clusterin-like"/>
</dbReference>
<dbReference type="InterPro" id="IPR016015">
    <property type="entry name" value="Clusterin_C"/>
</dbReference>
<dbReference type="InterPro" id="IPR033986">
    <property type="entry name" value="Clusterin_CS"/>
</dbReference>
<dbReference type="InterPro" id="IPR016014">
    <property type="entry name" value="Clusterin_N"/>
</dbReference>
<dbReference type="PANTHER" id="PTHR10970">
    <property type="entry name" value="CLUSTERIN"/>
    <property type="match status" value="1"/>
</dbReference>
<dbReference type="PANTHER" id="PTHR10970:SF1">
    <property type="entry name" value="CLUSTERIN"/>
    <property type="match status" value="1"/>
</dbReference>
<dbReference type="Pfam" id="PF01093">
    <property type="entry name" value="Clusterin"/>
    <property type="match status" value="1"/>
</dbReference>
<dbReference type="PIRSF" id="PIRSF002368">
    <property type="entry name" value="Clusterin"/>
    <property type="match status" value="1"/>
</dbReference>
<dbReference type="SMART" id="SM00035">
    <property type="entry name" value="CLa"/>
    <property type="match status" value="1"/>
</dbReference>
<dbReference type="SMART" id="SM00030">
    <property type="entry name" value="CLb"/>
    <property type="match status" value="1"/>
</dbReference>
<dbReference type="PROSITE" id="PS00492">
    <property type="entry name" value="CLUSTERIN_1"/>
    <property type="match status" value="1"/>
</dbReference>
<dbReference type="PROSITE" id="PS00493">
    <property type="entry name" value="CLUSTERIN_2"/>
    <property type="match status" value="1"/>
</dbReference>
<comment type="function">
    <text evidence="2 3 4 7">Functions as extracellular chaperone that prevents aggregation of non native proteins. Prevents stress-induced aggregation of blood plasma proteins. Inhibits formation of amyloid fibrils by APP, APOC2, B2M, CALCA, CSN3, SNCA and aggregation-prone LYZ variants (in vitro). Does not require ATP. Maintains partially unfolded proteins in a state appropriate for subsequent refolding by other chaperones, such as HSPA8/HSC70. Does not refold proteins by itself (By similarity). Binding to cell surface receptors triggers internalization of the chaperone-client complex and subsequent lysosomal or proteasomal degradation (PubMed:11697889). When secreted, protects cells against apoptosis and against cytolysis by complement: inhibits assembly of the complement membrane attack complex (MAC) by preventing polymerization of C9 pore component of the MAC complex. Intracellular forms interact with ubiquitin and SCF (SKP1-CUL1-F-box protein) E3 ubiquitin-protein ligase complexes and promote the ubiquitination and subsequent proteasomal degradation of target proteins. Promotes proteasomal degradation of COMMD1 and IKBKB. Modulates NF-kappa-B transcriptional activity (By similarity). Following stress, promotes apoptosis (By similarity). Inhibits apoptosis when associated with the mitochondrial membrane by interference with BAX-dependent release of cytochrome c into the cytoplasm. Plays a role in the regulation of cell proliferation. An intracellular form suppresses stress-induced apoptosis by stabilizing mitochondrial membrane integrity through interaction with HSPA5. Secreted form does not affect caspase or BAX-mediated intrinsic apoptosis and TNF-induced NF-kappa-B-activity (By similarity). Secreted form act as an important modulator during neuronal differentiation through interaction with STMN3 (By similarity). Plays a role in the clearance of immune complexes that arise during cell injury (By similarity).</text>
</comment>
<comment type="subunit">
    <text evidence="2 3">Antiparallel disulfide-linked heterodimer of an alpha chain and a beta chain. Self-associates and forms higher oligomers. Interacts with a broad range of misfolded proteins, including APP, APOC2 and LYZ. Slightly acidic pH promotes interaction with misfolded proteins. Forms high-molecular weight oligomers upon interaction with misfolded proteins. Interacts with APOA1, LRP2, CLUAP1 and PON1. Interacts with the complement membrane attack complex. Interacts (via alpha chain) with XRCC6. Interacts with SYVN1, COMMD1, BTRC, CUL1 and with ubiquitin and SCF (SKP1-CUL1-F-box protein) E3 ubiquitin-protein ligase complexes. Interacts (via alpha chain) with BAX in stressed cells, where BAX undergoes a conformation change leading to association with the mitochondrial membrane. Does not interact with BAX in unstressed cells. Found in a complex with LTF, CLU, EPPIN and SEMG1. Interacts (immaturely glycosylated pre-secreted form) with HSPA5; this interaction promotes CLU stability and facilitates stress-induced CLU retrotranslocation from the secretory pathway to the mitochondria, thereby reducing stress-induced apoptosis by stabilizing mitochondrial membrane integrity. Interacts with BCL2L1; this interaction releases and activates BAX and promotes cell death. Interacts with TGFBR2 and ACVR1 (By similarity). Interacts (secreted form) with STMN3; this interaction may act as an important modulator during neuronal differentiation (By similarity). Interacts with VLDLR and LRP8 (By similarity).</text>
</comment>
<comment type="subcellular location">
    <subcellularLocation>
        <location evidence="3">Secreted</location>
    </subcellularLocation>
    <subcellularLocation>
        <location evidence="3">Nucleus</location>
    </subcellularLocation>
    <subcellularLocation>
        <location evidence="3">Cytoplasm</location>
    </subcellularLocation>
    <subcellularLocation>
        <location evidence="3">Mitochondrion membrane</location>
        <topology evidence="3">Peripheral membrane protein</topology>
        <orientation evidence="3">Cytoplasmic side</orientation>
    </subcellularLocation>
    <subcellularLocation>
        <location evidence="3">Cytoplasm</location>
        <location evidence="3">Cytosol</location>
    </subcellularLocation>
    <subcellularLocation>
        <location evidence="3">Microsome</location>
    </subcellularLocation>
    <subcellularLocation>
        <location evidence="3">Endoplasmic reticulum</location>
    </subcellularLocation>
    <subcellularLocation>
        <location evidence="3">Mitochondrion</location>
    </subcellularLocation>
    <subcellularLocation>
        <location evidence="3">Mitochondrion membrane</location>
    </subcellularLocation>
    <subcellularLocation>
        <location evidence="2">Cytoplasm</location>
        <location evidence="2">Perinuclear region</location>
    </subcellularLocation>
    <subcellularLocation>
        <location evidence="5">Cytoplasmic vesicle</location>
        <location evidence="5">Secretory vesicle</location>
        <location evidence="5">Chromaffin granule</location>
    </subcellularLocation>
    <text evidence="3">Can retrotranslocate from the secretory compartments to the cytosol upon cellular stress. Detected in perinuclear foci that may be aggresomes containing misfolded, ubiquitinated proteins. Detected at the mitochondrion membrane upon induction of apoptosis. Under ER stress, a immaturely glycosylated pre-secreted form retrotranslocates from the endoplasmic reticulum (ER)-Golgi network to the cytoplasm to localize in the mitochondria through HSPA5 interaction. ER stress reduces secretion. Under the stress, minor amounts of non-secreted forms accumulate in cytoplasm.</text>
</comment>
<comment type="PTM">
    <text evidence="3 8">Proteolytically cleaved on its way through the secretory system, probably within the Golgi lumen (By similarity) (PubMed:7744793). Proteolytic cleavage is not necessary for its chaperone activity. All non-secreted forms are not proteolytically cleaved. Chaperone activity of uncleaved forms is dependent on a non-reducing environment (By similarity). This proteolytic maturation is disulfide bond formation dependent (PubMed:7744793).</text>
</comment>
<comment type="PTM">
    <text evidence="3">Polyubiquitinated, leading to proteasomal degradation. Under cellular stress, the intracellular level of cleaved form is reduced due to proteasomal degradation.</text>
</comment>
<comment type="PTM">
    <text evidence="3">Heavily N-glycosylated. About 30% of the protein mass is comprised of complex N-linked carbohydrate. Endoplasmic reticulum (ER) stress induces changes in glycosylation status and increases level of hypoglycosylated forms. Core carbohydrates are essential for chaperone activity. Non-secreted forms are hypoglycosylated or unglycosylated.</text>
</comment>
<comment type="similarity">
    <text evidence="10">Belongs to the clusterin family.</text>
</comment>
<feature type="signal peptide" evidence="6">
    <location>
        <begin position="1"/>
        <end position="22"/>
    </location>
</feature>
<feature type="chain" id="PRO_0000005523" description="Clusterin">
    <location>
        <begin position="23"/>
        <end position="445"/>
    </location>
</feature>
<feature type="chain" id="PRO_0000005524" description="Clusterin beta chain">
    <location>
        <begin position="23"/>
        <end position="226"/>
    </location>
</feature>
<feature type="chain" id="PRO_0000005525" description="Clusterin alpha chain">
    <location>
        <begin position="227"/>
        <end position="445"/>
    </location>
</feature>
<feature type="short sequence motif" description="Nuclear localization signal" evidence="4">
    <location>
        <begin position="78"/>
        <end position="81"/>
    </location>
</feature>
<feature type="short sequence motif" description="Nuclear localization signal" evidence="4">
    <location>
        <begin position="439"/>
        <end position="443"/>
    </location>
</feature>
<feature type="modified residue" description="Phosphoserine" evidence="3">
    <location>
        <position position="133"/>
    </location>
</feature>
<feature type="modified residue" description="Phosphoserine" evidence="3">
    <location>
        <position position="392"/>
    </location>
</feature>
<feature type="glycosylation site" description="N-linked (GlcNAc...) asparagine" evidence="6">
    <location>
        <position position="86"/>
    </location>
</feature>
<feature type="glycosylation site" description="N-linked (GlcNAc...) asparagine" evidence="6">
    <location>
        <position position="103"/>
    </location>
</feature>
<feature type="glycosylation site" description="N-linked (GlcNAc...) asparagine" evidence="6">
    <location>
        <position position="145"/>
    </location>
</feature>
<feature type="glycosylation site" description="N-linked (GlcNAc...) asparagine" evidence="6">
    <location>
        <position position="277"/>
    </location>
</feature>
<feature type="glycosylation site" description="N-linked (GlcNAc...) asparagine" evidence="6">
    <location>
        <position position="287"/>
    </location>
</feature>
<feature type="glycosylation site" description="N-linked (GlcNAc...) asparagine" evidence="6">
    <location>
        <position position="350"/>
    </location>
</feature>
<feature type="glycosylation site" description="N-linked (GlcNAc...) asparagine" evidence="6">
    <location>
        <position position="370"/>
    </location>
</feature>
<feature type="disulfide bond" description="Interchain (between beta and alpha chains)" evidence="1">
    <location>
        <begin position="102"/>
        <end position="309"/>
    </location>
</feature>
<feature type="disulfide bond" description="Interchain (between beta and alpha chains)" evidence="1">
    <location>
        <begin position="113"/>
        <end position="301"/>
    </location>
</feature>
<feature type="disulfide bond" description="Interchain (between beta and alpha chains)" evidence="1">
    <location>
        <begin position="116"/>
        <end position="298"/>
    </location>
</feature>
<feature type="disulfide bond" description="Interchain (between beta and alpha chains)" evidence="1">
    <location>
        <begin position="121"/>
        <end position="291"/>
    </location>
</feature>
<feature type="disulfide bond" description="Interchain (between beta and alpha chains)" evidence="1">
    <location>
        <begin position="129"/>
        <end position="281"/>
    </location>
</feature>
<sequence>MMKTLLLLVGLLLTWDNGRVLGDQAVSDTELQEMSTEGSKYINKEIKNALKGVKQIKTLIEQTNEERKSLLSNLEEAKKKKEDALNDTKDSETKLKASQGVCNDTMMALWEECKPCLKQTCMKFYARVCRSGSGLVGHQLEEFLNQSSPFYFWMNGDRIDSLLENDRQQTHALDVMQDSFNRASSIMDELFQDRFFTREPQDTYHYSPFSLFQRRPFFNPKFRIARNIIPFPRFQPLNFHDMFQPFFDMIHQAQQAMDVNLHRIPYHFPIEFPEEDNRTVCKEIRHNSTGCLKMKDQCEKCQEILSVDCSSNNPAQVQLRQELSNSLQIAEKFTKLYDELLQSYQEKMFNTSSLLKQLNEQFSWVSQLANLTQSEDPFYLQVTTVGSQTSDSNVPVGFTKVVVKLFDSDPITVMIPEAVSRNNPKFMETVAEKALQEYRQKHREE</sequence>
<reference key="1">
    <citation type="journal article" date="1991" name="J. Biol. Chem.">
        <title>Molecular cloning of gp 80, a glycoprotein complex secreted by kidney cells in vitro and in vivo. A link to the reproductive system and to the complement cascade.</title>
        <authorList>
            <person name="Hartmann K."/>
            <person name="Rauch J."/>
            <person name="Urban J."/>
            <person name="Parczyk K."/>
            <person name="Diel P."/>
            <person name="Pilarsky C."/>
            <person name="Appel D."/>
            <person name="Haase W."/>
            <person name="Mann K."/>
            <person name="Weller A."/>
            <person name="Koch-Brandt C."/>
        </authorList>
    </citation>
    <scope>NUCLEOTIDE SEQUENCE [MRNA]</scope>
    <source>
        <strain>Cocker spaniel</strain>
        <tissue>Kidney</tissue>
    </source>
</reference>
<reference key="2">
    <citation type="journal article" date="1995" name="J. Biol. Chem.">
        <title>Dithiothreitol treatment of Madin-Darby canine kidney cells reversibly blocks export from the endoplasmic reticulum but does not affect vectorial targeting of secretory proteins.</title>
        <authorList>
            <person name="Loesch A."/>
            <person name="Koch-Brandt C."/>
        </authorList>
    </citation>
    <scope>PROTEOLYTIC MATURATION</scope>
</reference>
<reference key="3">
    <citation type="journal article" date="2001" name="Exp. Cell Res.">
        <title>Multiple receptors mediate apoJ-dependent clearance of cellular debris into nonprofessional phagocytes.</title>
        <authorList>
            <person name="Bartl M.M."/>
            <person name="Luckenbach T."/>
            <person name="Bergner O."/>
            <person name="Ullrich O."/>
            <person name="Koch-Brandt C."/>
        </authorList>
    </citation>
    <scope>FUNCTION</scope>
</reference>
<gene>
    <name type="primary">CLU</name>
</gene>
<accession>P25473</accession>
<evidence type="ECO:0000250" key="1"/>
<evidence type="ECO:0000250" key="2">
    <source>
        <dbReference type="UniProtKB" id="P05371"/>
    </source>
</evidence>
<evidence type="ECO:0000250" key="3">
    <source>
        <dbReference type="UniProtKB" id="P10909"/>
    </source>
</evidence>
<evidence type="ECO:0000250" key="4">
    <source>
        <dbReference type="UniProtKB" id="Q06890"/>
    </source>
</evidence>
<evidence type="ECO:0000250" key="5">
    <source>
        <dbReference type="UniProtKB" id="Q9XSC5"/>
    </source>
</evidence>
<evidence type="ECO:0000255" key="6"/>
<evidence type="ECO:0000269" key="7">
    <source>
    </source>
</evidence>
<evidence type="ECO:0000269" key="8">
    <source>
    </source>
</evidence>
<evidence type="ECO:0000303" key="9">
    <source>
    </source>
</evidence>
<evidence type="ECO:0000305" key="10"/>
<organism>
    <name type="scientific">Canis lupus familiaris</name>
    <name type="common">Dog</name>
    <name type="synonym">Canis familiaris</name>
    <dbReference type="NCBI Taxonomy" id="9615"/>
    <lineage>
        <taxon>Eukaryota</taxon>
        <taxon>Metazoa</taxon>
        <taxon>Chordata</taxon>
        <taxon>Craniata</taxon>
        <taxon>Vertebrata</taxon>
        <taxon>Euteleostomi</taxon>
        <taxon>Mammalia</taxon>
        <taxon>Eutheria</taxon>
        <taxon>Laurasiatheria</taxon>
        <taxon>Carnivora</taxon>
        <taxon>Caniformia</taxon>
        <taxon>Canidae</taxon>
        <taxon>Canis</taxon>
    </lineage>
</organism>
<name>CLUS_CANLF</name>
<protein>
    <recommendedName>
        <fullName>Clusterin</fullName>
    </recommendedName>
    <alternativeName>
        <fullName evidence="9">Glycoprotein 80</fullName>
        <shortName evidence="9">Gp80</shortName>
    </alternativeName>
    <component>
        <recommendedName>
            <fullName>Clusterin beta chain</fullName>
        </recommendedName>
    </component>
    <component>
        <recommendedName>
            <fullName>Clusterin alpha chain</fullName>
        </recommendedName>
    </component>
</protein>
<keyword id="KW-0143">Chaperone</keyword>
<keyword id="KW-0963">Cytoplasm</keyword>
<keyword id="KW-0968">Cytoplasmic vesicle</keyword>
<keyword id="KW-1015">Disulfide bond</keyword>
<keyword id="KW-0256">Endoplasmic reticulum</keyword>
<keyword id="KW-0325">Glycoprotein</keyword>
<keyword id="KW-0472">Membrane</keyword>
<keyword id="KW-0492">Microsome</keyword>
<keyword id="KW-0496">Mitochondrion</keyword>
<keyword id="KW-0539">Nucleus</keyword>
<keyword id="KW-0597">Phosphoprotein</keyword>
<keyword id="KW-1185">Reference proteome</keyword>
<keyword id="KW-0964">Secreted</keyword>
<keyword id="KW-0732">Signal</keyword>
<keyword id="KW-0832">Ubl conjugation</keyword>